<feature type="chain" id="PRO_0000084534" description="Protein LYRIC">
    <location>
        <begin position="1"/>
        <end position="579"/>
    </location>
</feature>
<feature type="topological domain" description="Lumenal" evidence="4">
    <location>
        <begin position="1"/>
        <end position="48"/>
    </location>
</feature>
<feature type="transmembrane region" description="Helical" evidence="4">
    <location>
        <begin position="49"/>
        <end position="69"/>
    </location>
</feature>
<feature type="topological domain" description="Cytoplasmic" evidence="4">
    <location>
        <begin position="70"/>
        <end position="579"/>
    </location>
</feature>
<feature type="region of interest" description="Activation of NF-kappa-B" evidence="1">
    <location>
        <begin position="1"/>
        <end position="71"/>
    </location>
</feature>
<feature type="region of interest" description="Interaction with BCCIP" evidence="1">
    <location>
        <begin position="72"/>
        <end position="168"/>
    </location>
</feature>
<feature type="region of interest" description="Disordered" evidence="5">
    <location>
        <begin position="78"/>
        <end position="222"/>
    </location>
</feature>
<feature type="region of interest" description="Interaction with RELA" evidence="1">
    <location>
        <begin position="100"/>
        <end position="204"/>
    </location>
</feature>
<feature type="region of interest" description="Disordered" evidence="5">
    <location>
        <begin position="277"/>
        <end position="579"/>
    </location>
</feature>
<feature type="region of interest" description="Lung-homing for mammary tumors">
    <location>
        <begin position="378"/>
        <end position="440"/>
    </location>
</feature>
<feature type="compositionally biased region" description="Basic and acidic residues" evidence="5">
    <location>
        <begin position="108"/>
        <end position="126"/>
    </location>
</feature>
<feature type="compositionally biased region" description="Basic residues" evidence="5">
    <location>
        <begin position="159"/>
        <end position="168"/>
    </location>
</feature>
<feature type="compositionally biased region" description="Basic residues" evidence="5">
    <location>
        <begin position="197"/>
        <end position="207"/>
    </location>
</feature>
<feature type="compositionally biased region" description="Polar residues" evidence="5">
    <location>
        <begin position="317"/>
        <end position="329"/>
    </location>
</feature>
<feature type="compositionally biased region" description="Polar residues" evidence="5">
    <location>
        <begin position="351"/>
        <end position="369"/>
    </location>
</feature>
<feature type="compositionally biased region" description="Polar residues" evidence="5">
    <location>
        <begin position="380"/>
        <end position="391"/>
    </location>
</feature>
<feature type="compositionally biased region" description="Polar residues" evidence="5">
    <location>
        <begin position="410"/>
        <end position="420"/>
    </location>
</feature>
<feature type="compositionally biased region" description="Basic and acidic residues" evidence="5">
    <location>
        <begin position="421"/>
        <end position="431"/>
    </location>
</feature>
<feature type="compositionally biased region" description="Basic residues" evidence="5">
    <location>
        <begin position="438"/>
        <end position="448"/>
    </location>
</feature>
<feature type="compositionally biased region" description="Basic and acidic residues" evidence="5">
    <location>
        <begin position="449"/>
        <end position="470"/>
    </location>
</feature>
<feature type="compositionally biased region" description="Polar residues" evidence="5">
    <location>
        <begin position="517"/>
        <end position="533"/>
    </location>
</feature>
<feature type="compositionally biased region" description="Polar residues" evidence="5">
    <location>
        <begin position="546"/>
        <end position="565"/>
    </location>
</feature>
<feature type="compositionally biased region" description="Basic residues" evidence="5">
    <location>
        <begin position="568"/>
        <end position="579"/>
    </location>
</feature>
<feature type="modified residue" description="Phosphoserine" evidence="2">
    <location>
        <position position="179"/>
    </location>
</feature>
<feature type="modified residue" description="Phosphoserine" evidence="2">
    <location>
        <position position="215"/>
    </location>
</feature>
<feature type="modified residue" description="Phosphoserine" evidence="2">
    <location>
        <position position="250"/>
    </location>
</feature>
<feature type="modified residue" description="N6-acetyllysine" evidence="10">
    <location>
        <position position="263"/>
    </location>
</feature>
<feature type="modified residue" description="Phosphoserine" evidence="9">
    <location>
        <position position="297"/>
    </location>
</feature>
<feature type="modified residue" description="Phosphoserine" evidence="2">
    <location>
        <position position="303"/>
    </location>
</feature>
<feature type="modified residue" description="Phosphoserine" evidence="2">
    <location>
        <position position="308"/>
    </location>
</feature>
<feature type="modified residue" description="Phosphoserine" evidence="2">
    <location>
        <position position="341"/>
    </location>
</feature>
<feature type="modified residue" description="Phosphoserine" evidence="2">
    <location>
        <position position="366"/>
    </location>
</feature>
<feature type="modified residue" description="Phosphoserine" evidence="2">
    <location>
        <position position="412"/>
    </location>
</feature>
<feature type="modified residue" description="Phosphoserine" evidence="2">
    <location>
        <position position="423"/>
    </location>
</feature>
<feature type="modified residue" description="Phosphoserine" evidence="3">
    <location>
        <position position="454"/>
    </location>
</feature>
<feature type="modified residue" description="Phosphoserine" evidence="2">
    <location>
        <position position="475"/>
    </location>
</feature>
<feature type="modified residue" description="Phosphoserine" evidence="2">
    <location>
        <position position="491"/>
    </location>
</feature>
<feature type="modified residue" description="Phosphoserine" evidence="2">
    <location>
        <position position="493"/>
    </location>
</feature>
<feature type="modified residue" description="Phosphoserine" evidence="9">
    <location>
        <position position="565"/>
    </location>
</feature>
<feature type="sequence conflict" description="In Ref. 3; BAB27854." evidence="7" ref="3">
    <original>A</original>
    <variation>I</variation>
    <location>
        <position position="190"/>
    </location>
</feature>
<feature type="sequence conflict" description="In Ref. 3; BAE30709." evidence="7" ref="3">
    <original>G</original>
    <variation>R</variation>
    <location>
        <position position="264"/>
    </location>
</feature>
<feature type="sequence conflict" description="In Ref. 3; BAC26673." evidence="7" ref="3">
    <original>S</original>
    <variation>T</variation>
    <location>
        <position position="271"/>
    </location>
</feature>
<feature type="sequence conflict" description="In Ref. 3; BAE30709." evidence="7" ref="3">
    <original>L</original>
    <variation>F</variation>
    <location>
        <position position="296"/>
    </location>
</feature>
<sequence length="579" mass="63846">MAARSWQDELAQQAEEGSARLRELLSVGLGFLRTELGLDLGLEPKRYPGWVILVGTGALGLLLLFLLGYGWAAACAGARKKRRSPPRKREEAAPPTPAPDDLAQLKNLRSEEQKKKNRKKLPEKPKPNGRTVEVPEDEVVRNPRSITAKQAPETDKKNEKSKKNKKKSKSDAKAVQNSSRHDGKEVDEGAWETKISHREKRQQRKRDKVLTDSGSLDSTIPGIENIITVTTEQLTTASFPVGSKKNKGDSHLNVQVSNFKSGKGDSTLQVSSRLNENLTVNGGGWSEKSVKLSSQLSEEKWNSVPPASAGKRKTEPSAWTQDTGDTNANGKDWGRNWSDRSIFSGIGSTAEPVSQSTTSDYQWDVSRNQPYIDDEWSGLNGLSSADPSSDWNAPAEEWGNWVDEDRASLLKSQEPISNDQKVSDDDKEKGEGALPTGKSKKKKKKKKKQGEDNSHTQDTEDLEKDTREELPVNTSKARPKQEKACSLKTMSTSDPAEVLIKNSQPVKTLPPAISAEPSITLSKGDSDNSSSQVPPMLQDTDKPKSNAKQNSVPPSQTKSETNWESPKQIKKKKKARRET</sequence>
<reference key="1">
    <citation type="journal article" date="2004" name="Cancer Cell">
        <title>Metadherin, a cell surface protein in breast tumors that mediates lung metastasis.</title>
        <authorList>
            <person name="Brown D.M."/>
            <person name="Ruoslahti E."/>
        </authorList>
    </citation>
    <scope>NUCLEOTIDE SEQUENCE [MRNA]</scope>
    <scope>TISSUE SPECIFICITY</scope>
    <source>
        <strain>BALB/cJ</strain>
        <tissue>Mammary tumor</tissue>
    </source>
</reference>
<reference key="2">
    <citation type="journal article" date="2004" name="Exp. Cell Res.">
        <title>3D3/lyric: a novel transmembrane protein of the endoplasmic reticulum and nuclear envelope, which is also present in the nucleolus.</title>
        <authorList>
            <person name="Sutherland H.G.E."/>
            <person name="Lam Y.W."/>
            <person name="Briers S."/>
            <person name="Lamond A.I."/>
            <person name="Bickmore W.A."/>
        </authorList>
    </citation>
    <scope>NUCLEOTIDE SEQUENCE [MRNA]</scope>
    <scope>SUBCELLULAR LOCATION</scope>
    <source>
        <strain>129</strain>
        <tissue>Teratocarcinoma</tissue>
    </source>
</reference>
<reference key="3">
    <citation type="journal article" date="2005" name="Science">
        <title>The transcriptional landscape of the mammalian genome.</title>
        <authorList>
            <person name="Carninci P."/>
            <person name="Kasukawa T."/>
            <person name="Katayama S."/>
            <person name="Gough J."/>
            <person name="Frith M.C."/>
            <person name="Maeda N."/>
            <person name="Oyama R."/>
            <person name="Ravasi T."/>
            <person name="Lenhard B."/>
            <person name="Wells C."/>
            <person name="Kodzius R."/>
            <person name="Shimokawa K."/>
            <person name="Bajic V.B."/>
            <person name="Brenner S.E."/>
            <person name="Batalov S."/>
            <person name="Forrest A.R."/>
            <person name="Zavolan M."/>
            <person name="Davis M.J."/>
            <person name="Wilming L.G."/>
            <person name="Aidinis V."/>
            <person name="Allen J.E."/>
            <person name="Ambesi-Impiombato A."/>
            <person name="Apweiler R."/>
            <person name="Aturaliya R.N."/>
            <person name="Bailey T.L."/>
            <person name="Bansal M."/>
            <person name="Baxter L."/>
            <person name="Beisel K.W."/>
            <person name="Bersano T."/>
            <person name="Bono H."/>
            <person name="Chalk A.M."/>
            <person name="Chiu K.P."/>
            <person name="Choudhary V."/>
            <person name="Christoffels A."/>
            <person name="Clutterbuck D.R."/>
            <person name="Crowe M.L."/>
            <person name="Dalla E."/>
            <person name="Dalrymple B.P."/>
            <person name="de Bono B."/>
            <person name="Della Gatta G."/>
            <person name="di Bernardo D."/>
            <person name="Down T."/>
            <person name="Engstrom P."/>
            <person name="Fagiolini M."/>
            <person name="Faulkner G."/>
            <person name="Fletcher C.F."/>
            <person name="Fukushima T."/>
            <person name="Furuno M."/>
            <person name="Futaki S."/>
            <person name="Gariboldi M."/>
            <person name="Georgii-Hemming P."/>
            <person name="Gingeras T.R."/>
            <person name="Gojobori T."/>
            <person name="Green R.E."/>
            <person name="Gustincich S."/>
            <person name="Harbers M."/>
            <person name="Hayashi Y."/>
            <person name="Hensch T.K."/>
            <person name="Hirokawa N."/>
            <person name="Hill D."/>
            <person name="Huminiecki L."/>
            <person name="Iacono M."/>
            <person name="Ikeo K."/>
            <person name="Iwama A."/>
            <person name="Ishikawa T."/>
            <person name="Jakt M."/>
            <person name="Kanapin A."/>
            <person name="Katoh M."/>
            <person name="Kawasawa Y."/>
            <person name="Kelso J."/>
            <person name="Kitamura H."/>
            <person name="Kitano H."/>
            <person name="Kollias G."/>
            <person name="Krishnan S.P."/>
            <person name="Kruger A."/>
            <person name="Kummerfeld S.K."/>
            <person name="Kurochkin I.V."/>
            <person name="Lareau L.F."/>
            <person name="Lazarevic D."/>
            <person name="Lipovich L."/>
            <person name="Liu J."/>
            <person name="Liuni S."/>
            <person name="McWilliam S."/>
            <person name="Madan Babu M."/>
            <person name="Madera M."/>
            <person name="Marchionni L."/>
            <person name="Matsuda H."/>
            <person name="Matsuzawa S."/>
            <person name="Miki H."/>
            <person name="Mignone F."/>
            <person name="Miyake S."/>
            <person name="Morris K."/>
            <person name="Mottagui-Tabar S."/>
            <person name="Mulder N."/>
            <person name="Nakano N."/>
            <person name="Nakauchi H."/>
            <person name="Ng P."/>
            <person name="Nilsson R."/>
            <person name="Nishiguchi S."/>
            <person name="Nishikawa S."/>
            <person name="Nori F."/>
            <person name="Ohara O."/>
            <person name="Okazaki Y."/>
            <person name="Orlando V."/>
            <person name="Pang K.C."/>
            <person name="Pavan W.J."/>
            <person name="Pavesi G."/>
            <person name="Pesole G."/>
            <person name="Petrovsky N."/>
            <person name="Piazza S."/>
            <person name="Reed J."/>
            <person name="Reid J.F."/>
            <person name="Ring B.Z."/>
            <person name="Ringwald M."/>
            <person name="Rost B."/>
            <person name="Ruan Y."/>
            <person name="Salzberg S.L."/>
            <person name="Sandelin A."/>
            <person name="Schneider C."/>
            <person name="Schoenbach C."/>
            <person name="Sekiguchi K."/>
            <person name="Semple C.A."/>
            <person name="Seno S."/>
            <person name="Sessa L."/>
            <person name="Sheng Y."/>
            <person name="Shibata Y."/>
            <person name="Shimada H."/>
            <person name="Shimada K."/>
            <person name="Silva D."/>
            <person name="Sinclair B."/>
            <person name="Sperling S."/>
            <person name="Stupka E."/>
            <person name="Sugiura K."/>
            <person name="Sultana R."/>
            <person name="Takenaka Y."/>
            <person name="Taki K."/>
            <person name="Tammoja K."/>
            <person name="Tan S.L."/>
            <person name="Tang S."/>
            <person name="Taylor M.S."/>
            <person name="Tegner J."/>
            <person name="Teichmann S.A."/>
            <person name="Ueda H.R."/>
            <person name="van Nimwegen E."/>
            <person name="Verardo R."/>
            <person name="Wei C.L."/>
            <person name="Yagi K."/>
            <person name="Yamanishi H."/>
            <person name="Zabarovsky E."/>
            <person name="Zhu S."/>
            <person name="Zimmer A."/>
            <person name="Hide W."/>
            <person name="Bult C."/>
            <person name="Grimmond S.M."/>
            <person name="Teasdale R.D."/>
            <person name="Liu E.T."/>
            <person name="Brusic V."/>
            <person name="Quackenbush J."/>
            <person name="Wahlestedt C."/>
            <person name="Mattick J.S."/>
            <person name="Hume D.A."/>
            <person name="Kai C."/>
            <person name="Sasaki D."/>
            <person name="Tomaru Y."/>
            <person name="Fukuda S."/>
            <person name="Kanamori-Katayama M."/>
            <person name="Suzuki M."/>
            <person name="Aoki J."/>
            <person name="Arakawa T."/>
            <person name="Iida J."/>
            <person name="Imamura K."/>
            <person name="Itoh M."/>
            <person name="Kato T."/>
            <person name="Kawaji H."/>
            <person name="Kawagashira N."/>
            <person name="Kawashima T."/>
            <person name="Kojima M."/>
            <person name="Kondo S."/>
            <person name="Konno H."/>
            <person name="Nakano K."/>
            <person name="Ninomiya N."/>
            <person name="Nishio T."/>
            <person name="Okada M."/>
            <person name="Plessy C."/>
            <person name="Shibata K."/>
            <person name="Shiraki T."/>
            <person name="Suzuki S."/>
            <person name="Tagami M."/>
            <person name="Waki K."/>
            <person name="Watahiki A."/>
            <person name="Okamura-Oho Y."/>
            <person name="Suzuki H."/>
            <person name="Kawai J."/>
            <person name="Hayashizaki Y."/>
        </authorList>
    </citation>
    <scope>NUCLEOTIDE SEQUENCE [LARGE SCALE MRNA]</scope>
    <source>
        <strain>C57BL/6J</strain>
        <tissue>Bone marrow macrophage</tissue>
        <tissue>Embryo</tissue>
        <tissue>Testis</tissue>
        <tissue>Urinary bladder</tissue>
    </source>
</reference>
<reference key="4">
    <citation type="journal article" date="2004" name="Genome Res.">
        <title>The status, quality, and expansion of the NIH full-length cDNA project: the Mammalian Gene Collection (MGC).</title>
        <authorList>
            <consortium name="The MGC Project Team"/>
        </authorList>
    </citation>
    <scope>NUCLEOTIDE SEQUENCE [LARGE SCALE MRNA]</scope>
    <source>
        <strain>Czech II</strain>
        <strain>FVB/N</strain>
        <tissue>Colon</tissue>
        <tissue>Embryo</tissue>
        <tissue>Mammary tumor</tissue>
    </source>
</reference>
<reference key="5">
    <citation type="journal article" date="2006" name="Mol. Cell. Proteomics">
        <title>Comprehensive identification of phosphorylation sites in postsynaptic density preparations.</title>
        <authorList>
            <person name="Trinidad J.C."/>
            <person name="Specht C.G."/>
            <person name="Thalhammer A."/>
            <person name="Schoepfer R."/>
            <person name="Burlingame A.L."/>
        </authorList>
    </citation>
    <scope>IDENTIFICATION BY MASS SPECTROMETRY [LARGE SCALE ANALYSIS]</scope>
    <source>
        <tissue>Brain</tissue>
    </source>
</reference>
<reference key="6">
    <citation type="journal article" date="2007" name="Proc. Natl. Acad. Sci. U.S.A.">
        <title>Large-scale phosphorylation analysis of mouse liver.</title>
        <authorList>
            <person name="Villen J."/>
            <person name="Beausoleil S.A."/>
            <person name="Gerber S.A."/>
            <person name="Gygi S.P."/>
        </authorList>
    </citation>
    <scope>IDENTIFICATION BY MASS SPECTROMETRY [LARGE SCALE ANALYSIS]</scope>
    <source>
        <tissue>Liver</tissue>
    </source>
</reference>
<reference key="7">
    <citation type="journal article" date="2008" name="J. Proteome Res.">
        <title>Specific phosphopeptide enrichment with immobilized titanium ion affinity chromatography adsorbent for phosphoproteome analysis.</title>
        <authorList>
            <person name="Zhou H."/>
            <person name="Ye M."/>
            <person name="Dong J."/>
            <person name="Han G."/>
            <person name="Jiang X."/>
            <person name="Wu R."/>
            <person name="Zou H."/>
        </authorList>
    </citation>
    <scope>IDENTIFICATION BY MASS SPECTROMETRY [LARGE SCALE ANALYSIS]</scope>
    <source>
        <tissue>Liver</tissue>
    </source>
</reference>
<reference key="8">
    <citation type="journal article" date="2010" name="Cell">
        <title>A tissue-specific atlas of mouse protein phosphorylation and expression.</title>
        <authorList>
            <person name="Huttlin E.L."/>
            <person name="Jedrychowski M.P."/>
            <person name="Elias J.E."/>
            <person name="Goswami T."/>
            <person name="Rad R."/>
            <person name="Beausoleil S.A."/>
            <person name="Villen J."/>
            <person name="Haas W."/>
            <person name="Sowa M.E."/>
            <person name="Gygi S.P."/>
        </authorList>
    </citation>
    <scope>PHOSPHORYLATION [LARGE SCALE ANALYSIS] AT SER-297 AND SER-565</scope>
    <scope>IDENTIFICATION BY MASS SPECTROMETRY [LARGE SCALE ANALYSIS]</scope>
    <source>
        <tissue>Brain</tissue>
        <tissue>Brown adipose tissue</tissue>
        <tissue>Heart</tissue>
        <tissue>Kidney</tissue>
        <tissue>Liver</tissue>
        <tissue>Lung</tissue>
        <tissue>Pancreas</tissue>
        <tissue>Spleen</tissue>
        <tissue>Testis</tissue>
    </source>
</reference>
<reference key="9">
    <citation type="journal article" date="2013" name="Mol. Cell">
        <title>SIRT5-mediated lysine desuccinylation impacts diverse metabolic pathways.</title>
        <authorList>
            <person name="Park J."/>
            <person name="Chen Y."/>
            <person name="Tishkoff D.X."/>
            <person name="Peng C."/>
            <person name="Tan M."/>
            <person name="Dai L."/>
            <person name="Xie Z."/>
            <person name="Zhang Y."/>
            <person name="Zwaans B.M."/>
            <person name="Skinner M.E."/>
            <person name="Lombard D.B."/>
            <person name="Zhao Y."/>
        </authorList>
    </citation>
    <scope>ACETYLATION [LARGE SCALE ANALYSIS] AT LYS-263</scope>
    <scope>IDENTIFICATION BY MASS SPECTROMETRY [LARGE SCALE ANALYSIS]</scope>
    <source>
        <tissue>Embryonic fibroblast</tissue>
    </source>
</reference>
<evidence type="ECO:0000250" key="1"/>
<evidence type="ECO:0000250" key="2">
    <source>
        <dbReference type="UniProtKB" id="Q86UE4"/>
    </source>
</evidence>
<evidence type="ECO:0000250" key="3">
    <source>
        <dbReference type="UniProtKB" id="Q9Z1W6"/>
    </source>
</evidence>
<evidence type="ECO:0000255" key="4"/>
<evidence type="ECO:0000256" key="5">
    <source>
        <dbReference type="SAM" id="MobiDB-lite"/>
    </source>
</evidence>
<evidence type="ECO:0000269" key="6">
    <source>
    </source>
</evidence>
<evidence type="ECO:0000305" key="7"/>
<evidence type="ECO:0000305" key="8">
    <source>
    </source>
</evidence>
<evidence type="ECO:0007744" key="9">
    <source>
    </source>
</evidence>
<evidence type="ECO:0007744" key="10">
    <source>
    </source>
</evidence>
<keyword id="KW-0007">Acetylation</keyword>
<keyword id="KW-0965">Cell junction</keyword>
<keyword id="KW-0963">Cytoplasm</keyword>
<keyword id="KW-0256">Endoplasmic reticulum</keyword>
<keyword id="KW-0472">Membrane</keyword>
<keyword id="KW-0539">Nucleus</keyword>
<keyword id="KW-0597">Phosphoprotein</keyword>
<keyword id="KW-1185">Reference proteome</keyword>
<keyword id="KW-0796">Tight junction</keyword>
<keyword id="KW-0812">Transmembrane</keyword>
<keyword id="KW-1133">Transmembrane helix</keyword>
<dbReference type="EMBL" id="AY553638">
    <property type="protein sequence ID" value="AAS68097.1"/>
    <property type="molecule type" value="mRNA"/>
</dbReference>
<dbReference type="EMBL" id="AF501309">
    <property type="protein sequence ID" value="AAP30790.1"/>
    <property type="molecule type" value="mRNA"/>
</dbReference>
<dbReference type="EMBL" id="AK011808">
    <property type="protein sequence ID" value="BAB27854.1"/>
    <property type="molecule type" value="mRNA"/>
</dbReference>
<dbReference type="EMBL" id="AK029915">
    <property type="protein sequence ID" value="BAC26673.1"/>
    <property type="molecule type" value="mRNA"/>
</dbReference>
<dbReference type="EMBL" id="AK035302">
    <property type="protein sequence ID" value="BAC29022.1"/>
    <property type="molecule type" value="mRNA"/>
</dbReference>
<dbReference type="EMBL" id="AK151269">
    <property type="protein sequence ID" value="BAE30256.1"/>
    <property type="molecule type" value="mRNA"/>
</dbReference>
<dbReference type="EMBL" id="AK151810">
    <property type="protein sequence ID" value="BAE30709.1"/>
    <property type="molecule type" value="mRNA"/>
</dbReference>
<dbReference type="EMBL" id="BC023115">
    <property type="protein sequence ID" value="AAH23115.1"/>
    <property type="molecule type" value="mRNA"/>
</dbReference>
<dbReference type="EMBL" id="BC036994">
    <property type="protein sequence ID" value="AAH36994.1"/>
    <property type="molecule type" value="mRNA"/>
</dbReference>
<dbReference type="EMBL" id="BC138858">
    <property type="protein sequence ID" value="AAI38859.1"/>
    <property type="molecule type" value="mRNA"/>
</dbReference>
<dbReference type="EMBL" id="BC138859">
    <property type="protein sequence ID" value="AAI38860.1"/>
    <property type="molecule type" value="mRNA"/>
</dbReference>
<dbReference type="CCDS" id="CCDS27415.1"/>
<dbReference type="RefSeq" id="NP_080278.3">
    <property type="nucleotide sequence ID" value="NM_026002.4"/>
</dbReference>
<dbReference type="SMR" id="Q80WJ7"/>
<dbReference type="BioGRID" id="211981">
    <property type="interactions" value="14"/>
</dbReference>
<dbReference type="FunCoup" id="Q80WJ7">
    <property type="interactions" value="3638"/>
</dbReference>
<dbReference type="IntAct" id="Q80WJ7">
    <property type="interactions" value="4"/>
</dbReference>
<dbReference type="MINT" id="Q80WJ7"/>
<dbReference type="STRING" id="10090.ENSMUSP00000022865"/>
<dbReference type="GlyGen" id="Q80WJ7">
    <property type="glycosylation" value="4 sites, 1 N-linked glycan (2 sites), 1 O-linked glycan (1 site)"/>
</dbReference>
<dbReference type="iPTMnet" id="Q80WJ7"/>
<dbReference type="PhosphoSitePlus" id="Q80WJ7"/>
<dbReference type="SwissPalm" id="Q80WJ7"/>
<dbReference type="jPOST" id="Q80WJ7"/>
<dbReference type="PaxDb" id="10090-ENSMUSP00000022865"/>
<dbReference type="PeptideAtlas" id="Q80WJ7"/>
<dbReference type="ProteomicsDB" id="252693"/>
<dbReference type="Pumba" id="Q80WJ7"/>
<dbReference type="TopDownProteomics" id="Q80WJ7"/>
<dbReference type="Antibodypedia" id="2507">
    <property type="antibodies" value="432 antibodies from 39 providers"/>
</dbReference>
<dbReference type="DNASU" id="67154"/>
<dbReference type="Ensembl" id="ENSMUST00000022865.17">
    <property type="protein sequence ID" value="ENSMUSP00000022865.10"/>
    <property type="gene ID" value="ENSMUSG00000022255.17"/>
</dbReference>
<dbReference type="GeneID" id="67154"/>
<dbReference type="KEGG" id="mmu:67154"/>
<dbReference type="UCSC" id="uc007vlh.1">
    <property type="organism name" value="mouse"/>
</dbReference>
<dbReference type="AGR" id="MGI:1914404"/>
<dbReference type="CTD" id="92140"/>
<dbReference type="MGI" id="MGI:1914404">
    <property type="gene designation" value="Mtdh"/>
</dbReference>
<dbReference type="VEuPathDB" id="HostDB:ENSMUSG00000022255"/>
<dbReference type="eggNOG" id="ENOG502QU7P">
    <property type="taxonomic scope" value="Eukaryota"/>
</dbReference>
<dbReference type="GeneTree" id="ENSGT00940000154181"/>
<dbReference type="HOGENOM" id="CLU_034908_0_0_1"/>
<dbReference type="InParanoid" id="Q80WJ7"/>
<dbReference type="OMA" id="NPVSFSM"/>
<dbReference type="PhylomeDB" id="Q80WJ7"/>
<dbReference type="TreeFam" id="TF331350"/>
<dbReference type="BioGRID-ORCS" id="67154">
    <property type="hits" value="3 hits in 78 CRISPR screens"/>
</dbReference>
<dbReference type="CD-CODE" id="CE726F99">
    <property type="entry name" value="Postsynaptic density"/>
</dbReference>
<dbReference type="ChiTaRS" id="Mtdh">
    <property type="organism name" value="mouse"/>
</dbReference>
<dbReference type="PRO" id="PR:Q80WJ7"/>
<dbReference type="Proteomes" id="UP000000589">
    <property type="component" value="Chromosome 15"/>
</dbReference>
<dbReference type="RNAct" id="Q80WJ7">
    <property type="molecule type" value="protein"/>
</dbReference>
<dbReference type="Bgee" id="ENSMUSG00000022255">
    <property type="expression patterns" value="Expressed in otic placode and 256 other cell types or tissues"/>
</dbReference>
<dbReference type="ExpressionAtlas" id="Q80WJ7">
    <property type="expression patterns" value="baseline and differential"/>
</dbReference>
<dbReference type="GO" id="GO:0005923">
    <property type="term" value="C:bicellular tight junction"/>
    <property type="evidence" value="ECO:0007669"/>
    <property type="project" value="UniProtKB-SubCell"/>
</dbReference>
<dbReference type="GO" id="GO:0005783">
    <property type="term" value="C:endoplasmic reticulum"/>
    <property type="evidence" value="ECO:0000314"/>
    <property type="project" value="UniProtKB"/>
</dbReference>
<dbReference type="GO" id="GO:0005789">
    <property type="term" value="C:endoplasmic reticulum membrane"/>
    <property type="evidence" value="ECO:0000314"/>
    <property type="project" value="UniProtKB"/>
</dbReference>
<dbReference type="GO" id="GO:0001650">
    <property type="term" value="C:fibrillar center"/>
    <property type="evidence" value="ECO:0007669"/>
    <property type="project" value="Ensembl"/>
</dbReference>
<dbReference type="GO" id="GO:0016604">
    <property type="term" value="C:nuclear body"/>
    <property type="evidence" value="ECO:0007669"/>
    <property type="project" value="Ensembl"/>
</dbReference>
<dbReference type="GO" id="GO:0031965">
    <property type="term" value="C:nuclear membrane"/>
    <property type="evidence" value="ECO:0007669"/>
    <property type="project" value="UniProtKB-SubCell"/>
</dbReference>
<dbReference type="GO" id="GO:0005730">
    <property type="term" value="C:nucleolus"/>
    <property type="evidence" value="ECO:0000314"/>
    <property type="project" value="UniProtKB"/>
</dbReference>
<dbReference type="GO" id="GO:0048471">
    <property type="term" value="C:perinuclear region of cytoplasm"/>
    <property type="evidence" value="ECO:0000314"/>
    <property type="project" value="UniProtKB"/>
</dbReference>
<dbReference type="GO" id="GO:0003725">
    <property type="term" value="F:double-stranded RNA binding"/>
    <property type="evidence" value="ECO:0000266"/>
    <property type="project" value="MGI"/>
</dbReference>
<dbReference type="GO" id="GO:0051059">
    <property type="term" value="F:NF-kappaB binding"/>
    <property type="evidence" value="ECO:0000250"/>
    <property type="project" value="UniProtKB"/>
</dbReference>
<dbReference type="GO" id="GO:0003713">
    <property type="term" value="F:transcription coactivator activity"/>
    <property type="evidence" value="ECO:0007669"/>
    <property type="project" value="Ensembl"/>
</dbReference>
<dbReference type="GO" id="GO:0031663">
    <property type="term" value="P:lipopolysaccharide-mediated signaling pathway"/>
    <property type="evidence" value="ECO:0007669"/>
    <property type="project" value="Ensembl"/>
</dbReference>
<dbReference type="GO" id="GO:0043066">
    <property type="term" value="P:negative regulation of apoptotic process"/>
    <property type="evidence" value="ECO:0007669"/>
    <property type="project" value="Ensembl"/>
</dbReference>
<dbReference type="GO" id="GO:0000122">
    <property type="term" value="P:negative regulation of transcription by RNA polymerase II"/>
    <property type="evidence" value="ECO:0000250"/>
    <property type="project" value="UniProtKB"/>
</dbReference>
<dbReference type="GO" id="GO:0045766">
    <property type="term" value="P:positive regulation of angiogenesis"/>
    <property type="evidence" value="ECO:0007669"/>
    <property type="project" value="Ensembl"/>
</dbReference>
<dbReference type="GO" id="GO:0010508">
    <property type="term" value="P:positive regulation of autophagy"/>
    <property type="evidence" value="ECO:0007669"/>
    <property type="project" value="Ensembl"/>
</dbReference>
<dbReference type="GO" id="GO:0043123">
    <property type="term" value="P:positive regulation of canonical NF-kappaB signal transduction"/>
    <property type="evidence" value="ECO:0007669"/>
    <property type="project" value="Ensembl"/>
</dbReference>
<dbReference type="GO" id="GO:0051092">
    <property type="term" value="P:positive regulation of NF-kappaB transcription factor activity"/>
    <property type="evidence" value="ECO:0000250"/>
    <property type="project" value="UniProtKB"/>
</dbReference>
<dbReference type="GO" id="GO:0051897">
    <property type="term" value="P:positive regulation of phosphatidylinositol 3-kinase/protein kinase B signal transduction"/>
    <property type="evidence" value="ECO:0007669"/>
    <property type="project" value="Ensembl"/>
</dbReference>
<dbReference type="InterPro" id="IPR031402">
    <property type="entry name" value="LYRIC"/>
</dbReference>
<dbReference type="InterPro" id="IPR052305">
    <property type="entry name" value="TransReg_TumorExp"/>
</dbReference>
<dbReference type="PANTHER" id="PTHR23251">
    <property type="entry name" value="LYSINE-RICH CEACAM1 CO-ISOLATED PROTEIN LYRIC PROTEIN"/>
    <property type="match status" value="1"/>
</dbReference>
<dbReference type="PANTHER" id="PTHR23251:SF0">
    <property type="entry name" value="PROTEIN LYRIC"/>
    <property type="match status" value="1"/>
</dbReference>
<dbReference type="Pfam" id="PF15686">
    <property type="entry name" value="LYRIC"/>
    <property type="match status" value="1"/>
</dbReference>
<protein>
    <recommendedName>
        <fullName>Protein LYRIC</fullName>
    </recommendedName>
    <alternativeName>
        <fullName>3D3/LYRIC</fullName>
    </alternativeName>
    <alternativeName>
        <fullName>Lysine-rich CEACAM1 co-isolated protein</fullName>
    </alternativeName>
    <alternativeName>
        <fullName>Metadherin</fullName>
    </alternativeName>
    <alternativeName>
        <fullName>Metastasis adhesion protein</fullName>
    </alternativeName>
</protein>
<accession>Q80WJ7</accession>
<accession>B2RSG8</accession>
<accession>Q05CM0</accession>
<accession>Q3U9F8</accession>
<accession>Q3UAQ8</accession>
<accession>Q8BN67</accession>
<accession>Q8CBT9</accession>
<accession>Q8CDL0</accession>
<accession>Q8CGI7</accession>
<accession>Q9D052</accession>
<name>LYRIC_MOUSE</name>
<gene>
    <name type="primary">Mtdh</name>
    <name type="synonym">Lyric</name>
</gene>
<organism>
    <name type="scientific">Mus musculus</name>
    <name type="common">Mouse</name>
    <dbReference type="NCBI Taxonomy" id="10090"/>
    <lineage>
        <taxon>Eukaryota</taxon>
        <taxon>Metazoa</taxon>
        <taxon>Chordata</taxon>
        <taxon>Craniata</taxon>
        <taxon>Vertebrata</taxon>
        <taxon>Euteleostomi</taxon>
        <taxon>Mammalia</taxon>
        <taxon>Eutheria</taxon>
        <taxon>Euarchontoglires</taxon>
        <taxon>Glires</taxon>
        <taxon>Rodentia</taxon>
        <taxon>Myomorpha</taxon>
        <taxon>Muroidea</taxon>
        <taxon>Muridae</taxon>
        <taxon>Murinae</taxon>
        <taxon>Mus</taxon>
        <taxon>Mus</taxon>
    </lineage>
</organism>
<comment type="function">
    <text evidence="1">Down-regulates SLC1A2/EAAT2 promoter activity when expressed ectopically. Activates the nuclear factor kappa-B (NF-kappa-B) transcription factor. Promotes anchorage-independent growth of immortalized melanocytes and astrocytes which is a key component in tumor cell expansion. Promotes lung metastasis and also has an effect on bone and brain metastasis, possibly by enhancing the seeding of tumor cells to the target organ endothelium. Induces chemoresistance (By similarity).</text>
</comment>
<comment type="subunit">
    <text evidence="1">Interacts with BCCIP, CREBBP/CBP and RELA/p65.</text>
</comment>
<comment type="interaction">
    <interactant intactId="EBI-774530">
        <id>Q80WJ7</id>
    </interactant>
    <interactant intactId="EBI-529864">
        <id>Q78PY7</id>
        <label>Snd1</label>
    </interactant>
    <organismsDiffer>false</organismsDiffer>
    <experiments>4</experiments>
</comment>
<comment type="subcellular location">
    <subcellularLocation>
        <location evidence="1">Endoplasmic reticulum membrane</location>
        <topology evidence="1">Single-pass membrane protein</topology>
    </subcellularLocation>
    <subcellularLocation>
        <location evidence="1">Nucleus membrane</location>
        <topology evidence="1">Single-pass membrane protein</topology>
    </subcellularLocation>
    <subcellularLocation>
        <location evidence="1">Cell junction</location>
        <location evidence="1">Tight junction</location>
    </subcellularLocation>
    <subcellularLocation>
        <location evidence="1">Nucleus</location>
        <location evidence="1">Nucleolus</location>
    </subcellularLocation>
    <subcellularLocation>
        <location evidence="1">Cytoplasm</location>
        <location evidence="1">Perinuclear region</location>
    </subcellularLocation>
    <text evidence="1">In epithelial cells, recruited to tight junctions (TJ) during the maturation of the TJ complexes. A nucleolar staining may be due to nuclear targeting of an isoform lacking the transmembrane domain. TNF-alpha causes translocation from the cytoplasm to the nucleus (By similarity).</text>
</comment>
<comment type="tissue specificity">
    <text evidence="6">In the mammary gland, expressed at the apical surface of epithelial cells lining ducts, as well as in the mammary fat pad. Not detected in the spleen, kidney, lung, or skin; minute amounts seen in the liver. Expressed in Purkinje neurons in the early postnatal and adult cerebellum. Overexpressed in mammary tumors (at protein level).</text>
</comment>
<comment type="caution">
    <text evidence="8">Was originally thought to be a type II membrane protein but this is inconsistent with the results of multiple phosphorylation studies because this topology would locate the phosphorylation sites in the lumen or extracellularly rather than in the cytoplasm.</text>
</comment>
<proteinExistence type="evidence at protein level"/>